<name>SSP31_PHAJA</name>
<sequence>LFFKGEKKL</sequence>
<evidence type="ECO:0000269" key="1">
    <source>
    </source>
</evidence>
<evidence type="ECO:0000303" key="2">
    <source>
    </source>
</evidence>
<evidence type="ECO:0000305" key="3"/>
<accession>P86607</accession>
<dbReference type="GO" id="GO:0005576">
    <property type="term" value="C:extracellular region"/>
    <property type="evidence" value="ECO:0007669"/>
    <property type="project" value="UniProtKB-SubCell"/>
</dbReference>
<keyword id="KW-0903">Direct protein sequencing</keyword>
<keyword id="KW-0964">Secreted</keyword>
<reference evidence="3" key="1">
    <citation type="journal article" date="2011" name="Toxicon">
        <title>Peptidomic dissection of the skin secretion of Phasmahyla jandaia (Bokermann and Sazima, 1978) (Anura, Hylidae, Phyllomedusinae).</title>
        <authorList>
            <person name="Rates B."/>
            <person name="Silva L.P."/>
            <person name="Ireno I.C."/>
            <person name="Leite F.S."/>
            <person name="Borges M.H."/>
            <person name="Bloch C. Jr."/>
            <person name="De Lima M.E."/>
            <person name="Pimenta A.M."/>
        </authorList>
    </citation>
    <scope>PROTEIN SEQUENCE</scope>
    <scope>SUBCELLULAR LOCATION</scope>
    <scope>TISSUE SPECIFICITY</scope>
    <scope>MASS SPECTROMETRY</scope>
    <source>
        <tissue evidence="1">Skin secretion</tissue>
    </source>
</reference>
<organism>
    <name type="scientific">Phasmahyla jandaia</name>
    <name type="common">Jandaia leaf frog</name>
    <name type="synonym">Phyllomedusa jandaia</name>
    <dbReference type="NCBI Taxonomy" id="762504"/>
    <lineage>
        <taxon>Eukaryota</taxon>
        <taxon>Metazoa</taxon>
        <taxon>Chordata</taxon>
        <taxon>Craniata</taxon>
        <taxon>Vertebrata</taxon>
        <taxon>Euteleostomi</taxon>
        <taxon>Amphibia</taxon>
        <taxon>Batrachia</taxon>
        <taxon>Anura</taxon>
        <taxon>Neobatrachia</taxon>
        <taxon>Hyloidea</taxon>
        <taxon>Hylidae</taxon>
        <taxon>Phyllomedusinae</taxon>
        <taxon>Phasmahyla</taxon>
    </lineage>
</organism>
<protein>
    <recommendedName>
        <fullName evidence="2">Skin secreted peptide P3-1</fullName>
        <shortName evidence="2">PjP3-1</shortName>
    </recommendedName>
</protein>
<feature type="peptide" id="PRO_0000404644" description="Skin secreted peptide P3-1" evidence="1">
    <location>
        <begin position="1"/>
        <end position="9"/>
    </location>
</feature>
<feature type="unsure residue" description="L or I" evidence="1">
    <location>
        <position position="1"/>
    </location>
</feature>
<feature type="unsure residue" description="K or Q" evidence="1">
    <location>
        <position position="4"/>
    </location>
</feature>
<feature type="unsure residue" description="K or Q" evidence="1">
    <location>
        <position position="7"/>
    </location>
</feature>
<feature type="unsure residue" description="K or Q" evidence="1">
    <location>
        <position position="8"/>
    </location>
</feature>
<feature type="unsure residue" description="L or I" evidence="1">
    <location>
        <position position="9"/>
    </location>
</feature>
<proteinExistence type="evidence at protein level"/>
<comment type="subcellular location">
    <subcellularLocation>
        <location evidence="1">Secreted</location>
    </subcellularLocation>
</comment>
<comment type="tissue specificity">
    <text evidence="1">Expressed by the skin glands.</text>
</comment>
<comment type="mass spectrometry"/>